<feature type="chain" id="PRO_0000187883" description="Thiol peroxidase">
    <location>
        <begin position="1"/>
        <end position="171"/>
    </location>
</feature>
<feature type="domain" description="Thioredoxin" evidence="1">
    <location>
        <begin position="18"/>
        <end position="169"/>
    </location>
</feature>
<feature type="active site" description="Cysteine sulfenic acid (-SOH) intermediate" evidence="1">
    <location>
        <position position="60"/>
    </location>
</feature>
<feature type="disulfide bond" description="Redox-active" evidence="1">
    <location>
        <begin position="60"/>
        <end position="94"/>
    </location>
</feature>
<reference key="1">
    <citation type="journal article" date="2004" name="J. Bacteriol.">
        <title>Comparative genomics of two Leptospira interrogans serovars reveals novel insights into physiology and pathogenesis.</title>
        <authorList>
            <person name="Nascimento A.L.T.O."/>
            <person name="Ko A.I."/>
            <person name="Martins E.A.L."/>
            <person name="Monteiro-Vitorello C.B."/>
            <person name="Ho P.L."/>
            <person name="Haake D.A."/>
            <person name="Verjovski-Almeida S."/>
            <person name="Hartskeerl R.A."/>
            <person name="Marques M.V."/>
            <person name="Oliveira M.C."/>
            <person name="Menck C.F.M."/>
            <person name="Leite L.C.C."/>
            <person name="Carrer H."/>
            <person name="Coutinho L.L."/>
            <person name="Degrave W.M."/>
            <person name="Dellagostin O.A."/>
            <person name="El-Dorry H."/>
            <person name="Ferro E.S."/>
            <person name="Ferro M.I.T."/>
            <person name="Furlan L.R."/>
            <person name="Gamberini M."/>
            <person name="Giglioti E.A."/>
            <person name="Goes-Neto A."/>
            <person name="Goldman G.H."/>
            <person name="Goldman M.H.S."/>
            <person name="Harakava R."/>
            <person name="Jeronimo S.M.B."/>
            <person name="Junqueira-de-Azevedo I.L.M."/>
            <person name="Kimura E.T."/>
            <person name="Kuramae E.E."/>
            <person name="Lemos E.G.M."/>
            <person name="Lemos M.V.F."/>
            <person name="Marino C.L."/>
            <person name="Nunes L.R."/>
            <person name="de Oliveira R.C."/>
            <person name="Pereira G.G."/>
            <person name="Reis M.S."/>
            <person name="Schriefer A."/>
            <person name="Siqueira W.J."/>
            <person name="Sommer P."/>
            <person name="Tsai S.M."/>
            <person name="Simpson A.J.G."/>
            <person name="Ferro J.A."/>
            <person name="Camargo L.E.A."/>
            <person name="Kitajima J.P."/>
            <person name="Setubal J.C."/>
            <person name="Van Sluys M.A."/>
        </authorList>
    </citation>
    <scope>NUCLEOTIDE SEQUENCE [LARGE SCALE GENOMIC DNA]</scope>
    <source>
        <strain>Fiocruz L1-130</strain>
    </source>
</reference>
<evidence type="ECO:0000255" key="1">
    <source>
        <dbReference type="HAMAP-Rule" id="MF_00269"/>
    </source>
</evidence>
<protein>
    <recommendedName>
        <fullName evidence="1">Thiol peroxidase</fullName>
        <shortName evidence="1">Tpx</shortName>
        <ecNumber evidence="1">1.11.1.24</ecNumber>
    </recommendedName>
    <alternativeName>
        <fullName evidence="1">Peroxiredoxin tpx</fullName>
        <shortName evidence="1">Prx</shortName>
    </alternativeName>
    <alternativeName>
        <fullName evidence="1">Thioredoxin peroxidase</fullName>
    </alternativeName>
    <alternativeName>
        <fullName evidence="1">Thioredoxin-dependent peroxiredoxin</fullName>
    </alternativeName>
</protein>
<sequence>MTKVTLKGNPVQLEGKIPSPGDKAPDFKAIKQDLSEFSLKDYAGKVKILVAVPSLDTSVCALETKAFNEKAAGISGVTTLVISGDLPFAMGRFCSTEGINSPNLVTGSQYRDFSFSKAYGTHIADGPLKGLSARAVFVLDKSDTVRYVEIVPEITTEPNYTAAIAAANAAL</sequence>
<proteinExistence type="inferred from homology"/>
<accession>Q72NR4</accession>
<comment type="function">
    <text evidence="1">Thiol-specific peroxidase that catalyzes the reduction of hydrogen peroxide and organic hydroperoxides to water and alcohols, respectively. Plays a role in cell protection against oxidative stress by detoxifying peroxides.</text>
</comment>
<comment type="catalytic activity">
    <reaction evidence="1">
        <text>a hydroperoxide + [thioredoxin]-dithiol = an alcohol + [thioredoxin]-disulfide + H2O</text>
        <dbReference type="Rhea" id="RHEA:62620"/>
        <dbReference type="Rhea" id="RHEA-COMP:10698"/>
        <dbReference type="Rhea" id="RHEA-COMP:10700"/>
        <dbReference type="ChEBI" id="CHEBI:15377"/>
        <dbReference type="ChEBI" id="CHEBI:29950"/>
        <dbReference type="ChEBI" id="CHEBI:30879"/>
        <dbReference type="ChEBI" id="CHEBI:35924"/>
        <dbReference type="ChEBI" id="CHEBI:50058"/>
        <dbReference type="EC" id="1.11.1.24"/>
    </reaction>
</comment>
<comment type="subunit">
    <text evidence="1">Homodimer.</text>
</comment>
<comment type="miscellaneous">
    <text evidence="1">The active site is a conserved redox-active cysteine residue, the peroxidatic cysteine (C(P)), which makes the nucleophilic attack on the peroxide substrate. The peroxide oxidizes the C(P)-SH to cysteine sulfenic acid (C(P)-SOH), which then reacts with another cysteine residue, the resolving cysteine (C(R)), to form a disulfide bridge. The disulfide is subsequently reduced by an appropriate electron donor to complete the catalytic cycle. In this atypical 2-Cys peroxiredoxin, C(R) is present in the same subunit to form an intramolecular disulfide. The disulfide is subsequently reduced by thioredoxin.</text>
</comment>
<comment type="similarity">
    <text evidence="1">Belongs to the peroxiredoxin family. Tpx subfamily.</text>
</comment>
<gene>
    <name evidence="1" type="primary">tpx</name>
    <name type="ordered locus">LIC_12765</name>
</gene>
<organism>
    <name type="scientific">Leptospira interrogans serogroup Icterohaemorrhagiae serovar copenhageni (strain Fiocruz L1-130)</name>
    <dbReference type="NCBI Taxonomy" id="267671"/>
    <lineage>
        <taxon>Bacteria</taxon>
        <taxon>Pseudomonadati</taxon>
        <taxon>Spirochaetota</taxon>
        <taxon>Spirochaetia</taxon>
        <taxon>Leptospirales</taxon>
        <taxon>Leptospiraceae</taxon>
        <taxon>Leptospira</taxon>
    </lineage>
</organism>
<keyword id="KW-0049">Antioxidant</keyword>
<keyword id="KW-1015">Disulfide bond</keyword>
<keyword id="KW-0560">Oxidoreductase</keyword>
<keyword id="KW-0575">Peroxidase</keyword>
<keyword id="KW-0676">Redox-active center</keyword>
<dbReference type="EC" id="1.11.1.24" evidence="1"/>
<dbReference type="EMBL" id="AE016823">
    <property type="protein sequence ID" value="AAS71322.1"/>
    <property type="molecule type" value="Genomic_DNA"/>
</dbReference>
<dbReference type="RefSeq" id="WP_000170133.1">
    <property type="nucleotide sequence ID" value="NC_005823.1"/>
</dbReference>
<dbReference type="SMR" id="Q72NR4"/>
<dbReference type="GeneID" id="61142643"/>
<dbReference type="KEGG" id="lic:LIC_12765"/>
<dbReference type="HOGENOM" id="CLU_042529_12_2_12"/>
<dbReference type="Proteomes" id="UP000007037">
    <property type="component" value="Chromosome I"/>
</dbReference>
<dbReference type="GO" id="GO:0008379">
    <property type="term" value="F:thioredoxin peroxidase activity"/>
    <property type="evidence" value="ECO:0007669"/>
    <property type="project" value="UniProtKB-UniRule"/>
</dbReference>
<dbReference type="CDD" id="cd03014">
    <property type="entry name" value="PRX_Atyp2cys"/>
    <property type="match status" value="1"/>
</dbReference>
<dbReference type="Gene3D" id="3.40.30.10">
    <property type="entry name" value="Glutaredoxin"/>
    <property type="match status" value="1"/>
</dbReference>
<dbReference type="HAMAP" id="MF_00269">
    <property type="entry name" value="Tpx"/>
    <property type="match status" value="1"/>
</dbReference>
<dbReference type="InterPro" id="IPR013740">
    <property type="entry name" value="Redoxin"/>
</dbReference>
<dbReference type="InterPro" id="IPR036249">
    <property type="entry name" value="Thioredoxin-like_sf"/>
</dbReference>
<dbReference type="InterPro" id="IPR013766">
    <property type="entry name" value="Thioredoxin_domain"/>
</dbReference>
<dbReference type="InterPro" id="IPR002065">
    <property type="entry name" value="TPX"/>
</dbReference>
<dbReference type="InterPro" id="IPR018219">
    <property type="entry name" value="Tpx_CS"/>
</dbReference>
<dbReference type="InterPro" id="IPR050455">
    <property type="entry name" value="Tpx_Peroxidase_subfamily"/>
</dbReference>
<dbReference type="NCBIfam" id="NF001808">
    <property type="entry name" value="PRK00522.1"/>
    <property type="match status" value="1"/>
</dbReference>
<dbReference type="PANTHER" id="PTHR43110">
    <property type="entry name" value="THIOL PEROXIDASE"/>
    <property type="match status" value="1"/>
</dbReference>
<dbReference type="PANTHER" id="PTHR43110:SF1">
    <property type="entry name" value="THIOL PEROXIDASE"/>
    <property type="match status" value="1"/>
</dbReference>
<dbReference type="Pfam" id="PF08534">
    <property type="entry name" value="Redoxin"/>
    <property type="match status" value="1"/>
</dbReference>
<dbReference type="SUPFAM" id="SSF52833">
    <property type="entry name" value="Thioredoxin-like"/>
    <property type="match status" value="1"/>
</dbReference>
<dbReference type="PROSITE" id="PS51352">
    <property type="entry name" value="THIOREDOXIN_2"/>
    <property type="match status" value="1"/>
</dbReference>
<dbReference type="PROSITE" id="PS01265">
    <property type="entry name" value="TPX"/>
    <property type="match status" value="1"/>
</dbReference>
<name>TPX_LEPIC</name>